<comment type="function">
    <text evidence="1">Major role in the synthesis of nucleoside triphosphates other than ATP. The ATP gamma phosphate is transferred to the NDP beta phosphate via a ping-pong mechanism, using a phosphorylated active-site intermediate.</text>
</comment>
<comment type="catalytic activity">
    <reaction evidence="1">
        <text>a 2'-deoxyribonucleoside 5'-diphosphate + ATP = a 2'-deoxyribonucleoside 5'-triphosphate + ADP</text>
        <dbReference type="Rhea" id="RHEA:44640"/>
        <dbReference type="ChEBI" id="CHEBI:30616"/>
        <dbReference type="ChEBI" id="CHEBI:61560"/>
        <dbReference type="ChEBI" id="CHEBI:73316"/>
        <dbReference type="ChEBI" id="CHEBI:456216"/>
        <dbReference type="EC" id="2.7.4.6"/>
    </reaction>
</comment>
<comment type="catalytic activity">
    <reaction evidence="1">
        <text>a ribonucleoside 5'-diphosphate + ATP = a ribonucleoside 5'-triphosphate + ADP</text>
        <dbReference type="Rhea" id="RHEA:18113"/>
        <dbReference type="ChEBI" id="CHEBI:30616"/>
        <dbReference type="ChEBI" id="CHEBI:57930"/>
        <dbReference type="ChEBI" id="CHEBI:61557"/>
        <dbReference type="ChEBI" id="CHEBI:456216"/>
        <dbReference type="EC" id="2.7.4.6"/>
    </reaction>
</comment>
<comment type="cofactor">
    <cofactor evidence="1">
        <name>Mg(2+)</name>
        <dbReference type="ChEBI" id="CHEBI:18420"/>
    </cofactor>
</comment>
<comment type="subunit">
    <text evidence="1">Homotetramer.</text>
</comment>
<comment type="subcellular location">
    <subcellularLocation>
        <location evidence="1">Cytoplasm</location>
    </subcellularLocation>
</comment>
<comment type="similarity">
    <text evidence="1">Belongs to the NDK family.</text>
</comment>
<protein>
    <recommendedName>
        <fullName evidence="1">Nucleoside diphosphate kinase</fullName>
        <shortName evidence="1">NDK</shortName>
        <shortName evidence="1">NDP kinase</shortName>
        <ecNumber evidence="1">2.7.4.6</ecNumber>
    </recommendedName>
    <alternativeName>
        <fullName evidence="1">Nucleoside-2-P kinase</fullName>
    </alternativeName>
</protein>
<feature type="chain" id="PRO_1000135253" description="Nucleoside diphosphate kinase">
    <location>
        <begin position="1"/>
        <end position="141"/>
    </location>
</feature>
<feature type="active site" description="Pros-phosphohistidine intermediate" evidence="1">
    <location>
        <position position="117"/>
    </location>
</feature>
<feature type="binding site" evidence="1">
    <location>
        <position position="11"/>
    </location>
    <ligand>
        <name>ATP</name>
        <dbReference type="ChEBI" id="CHEBI:30616"/>
    </ligand>
</feature>
<feature type="binding site" evidence="1">
    <location>
        <position position="59"/>
    </location>
    <ligand>
        <name>ATP</name>
        <dbReference type="ChEBI" id="CHEBI:30616"/>
    </ligand>
</feature>
<feature type="binding site" evidence="1">
    <location>
        <position position="87"/>
    </location>
    <ligand>
        <name>ATP</name>
        <dbReference type="ChEBI" id="CHEBI:30616"/>
    </ligand>
</feature>
<feature type="binding site" evidence="1">
    <location>
        <position position="93"/>
    </location>
    <ligand>
        <name>ATP</name>
        <dbReference type="ChEBI" id="CHEBI:30616"/>
    </ligand>
</feature>
<feature type="binding site" evidence="1">
    <location>
        <position position="104"/>
    </location>
    <ligand>
        <name>ATP</name>
        <dbReference type="ChEBI" id="CHEBI:30616"/>
    </ligand>
</feature>
<feature type="binding site" evidence="1">
    <location>
        <position position="114"/>
    </location>
    <ligand>
        <name>ATP</name>
        <dbReference type="ChEBI" id="CHEBI:30616"/>
    </ligand>
</feature>
<name>NDK_ACIET</name>
<sequence>MAIERTLSIIKPDAVAKNVIGQIYARFEAAGLKIVAARMIHLSRAEAEQFYAVHKERPFFKDLVDFMISGPVMVQALEGENAVLKNRELMGATDPKKAAPGTIRADFADSIDANAVHGSDAAETAQVEVAFFFPGLNIYSR</sequence>
<organism>
    <name type="scientific">Acidovorax ebreus (strain TPSY)</name>
    <name type="common">Diaphorobacter sp. (strain TPSY)</name>
    <dbReference type="NCBI Taxonomy" id="535289"/>
    <lineage>
        <taxon>Bacteria</taxon>
        <taxon>Pseudomonadati</taxon>
        <taxon>Pseudomonadota</taxon>
        <taxon>Betaproteobacteria</taxon>
        <taxon>Burkholderiales</taxon>
        <taxon>Comamonadaceae</taxon>
        <taxon>Diaphorobacter</taxon>
    </lineage>
</organism>
<accession>B9MFX2</accession>
<gene>
    <name evidence="1" type="primary">ndk</name>
    <name type="ordered locus">Dtpsy_1086</name>
</gene>
<evidence type="ECO:0000255" key="1">
    <source>
        <dbReference type="HAMAP-Rule" id="MF_00451"/>
    </source>
</evidence>
<dbReference type="EC" id="2.7.4.6" evidence="1"/>
<dbReference type="EMBL" id="CP001392">
    <property type="protein sequence ID" value="ACM32563.1"/>
    <property type="molecule type" value="Genomic_DNA"/>
</dbReference>
<dbReference type="RefSeq" id="WP_015912786.1">
    <property type="nucleotide sequence ID" value="NC_011992.1"/>
</dbReference>
<dbReference type="SMR" id="B9MFX2"/>
<dbReference type="GeneID" id="84682367"/>
<dbReference type="KEGG" id="dia:Dtpsy_1086"/>
<dbReference type="eggNOG" id="COG0105">
    <property type="taxonomic scope" value="Bacteria"/>
</dbReference>
<dbReference type="HOGENOM" id="CLU_060216_8_1_4"/>
<dbReference type="Proteomes" id="UP000000450">
    <property type="component" value="Chromosome"/>
</dbReference>
<dbReference type="GO" id="GO:0005737">
    <property type="term" value="C:cytoplasm"/>
    <property type="evidence" value="ECO:0007669"/>
    <property type="project" value="UniProtKB-SubCell"/>
</dbReference>
<dbReference type="GO" id="GO:0005524">
    <property type="term" value="F:ATP binding"/>
    <property type="evidence" value="ECO:0007669"/>
    <property type="project" value="UniProtKB-UniRule"/>
</dbReference>
<dbReference type="GO" id="GO:0046872">
    <property type="term" value="F:metal ion binding"/>
    <property type="evidence" value="ECO:0007669"/>
    <property type="project" value="UniProtKB-KW"/>
</dbReference>
<dbReference type="GO" id="GO:0004550">
    <property type="term" value="F:nucleoside diphosphate kinase activity"/>
    <property type="evidence" value="ECO:0007669"/>
    <property type="project" value="UniProtKB-UniRule"/>
</dbReference>
<dbReference type="GO" id="GO:0006241">
    <property type="term" value="P:CTP biosynthetic process"/>
    <property type="evidence" value="ECO:0007669"/>
    <property type="project" value="UniProtKB-UniRule"/>
</dbReference>
<dbReference type="GO" id="GO:0006183">
    <property type="term" value="P:GTP biosynthetic process"/>
    <property type="evidence" value="ECO:0007669"/>
    <property type="project" value="UniProtKB-UniRule"/>
</dbReference>
<dbReference type="GO" id="GO:0006228">
    <property type="term" value="P:UTP biosynthetic process"/>
    <property type="evidence" value="ECO:0007669"/>
    <property type="project" value="UniProtKB-UniRule"/>
</dbReference>
<dbReference type="CDD" id="cd04413">
    <property type="entry name" value="NDPk_I"/>
    <property type="match status" value="1"/>
</dbReference>
<dbReference type="FunFam" id="3.30.70.141:FF:000001">
    <property type="entry name" value="Nucleoside diphosphate kinase"/>
    <property type="match status" value="1"/>
</dbReference>
<dbReference type="Gene3D" id="3.30.70.141">
    <property type="entry name" value="Nucleoside diphosphate kinase-like domain"/>
    <property type="match status" value="1"/>
</dbReference>
<dbReference type="HAMAP" id="MF_00451">
    <property type="entry name" value="NDP_kinase"/>
    <property type="match status" value="1"/>
</dbReference>
<dbReference type="InterPro" id="IPR034907">
    <property type="entry name" value="NDK-like_dom"/>
</dbReference>
<dbReference type="InterPro" id="IPR036850">
    <property type="entry name" value="NDK-like_dom_sf"/>
</dbReference>
<dbReference type="InterPro" id="IPR001564">
    <property type="entry name" value="Nucleoside_diP_kinase"/>
</dbReference>
<dbReference type="NCBIfam" id="NF001908">
    <property type="entry name" value="PRK00668.1"/>
    <property type="match status" value="1"/>
</dbReference>
<dbReference type="PANTHER" id="PTHR46161">
    <property type="entry name" value="NUCLEOSIDE DIPHOSPHATE KINASE"/>
    <property type="match status" value="1"/>
</dbReference>
<dbReference type="PANTHER" id="PTHR46161:SF3">
    <property type="entry name" value="NUCLEOSIDE DIPHOSPHATE KINASE DDB_G0292928-RELATED"/>
    <property type="match status" value="1"/>
</dbReference>
<dbReference type="Pfam" id="PF00334">
    <property type="entry name" value="NDK"/>
    <property type="match status" value="1"/>
</dbReference>
<dbReference type="PRINTS" id="PR01243">
    <property type="entry name" value="NUCDPKINASE"/>
</dbReference>
<dbReference type="SMART" id="SM00562">
    <property type="entry name" value="NDK"/>
    <property type="match status" value="1"/>
</dbReference>
<dbReference type="SUPFAM" id="SSF54919">
    <property type="entry name" value="Nucleoside diphosphate kinase, NDK"/>
    <property type="match status" value="1"/>
</dbReference>
<dbReference type="PROSITE" id="PS51374">
    <property type="entry name" value="NDPK_LIKE"/>
    <property type="match status" value="1"/>
</dbReference>
<reference key="1">
    <citation type="submission" date="2009-01" db="EMBL/GenBank/DDBJ databases">
        <title>Complete sequence of Diaphorobacter sp. TPSY.</title>
        <authorList>
            <consortium name="US DOE Joint Genome Institute"/>
            <person name="Lucas S."/>
            <person name="Copeland A."/>
            <person name="Lapidus A."/>
            <person name="Glavina del Rio T."/>
            <person name="Tice H."/>
            <person name="Bruce D."/>
            <person name="Goodwin L."/>
            <person name="Pitluck S."/>
            <person name="Chertkov O."/>
            <person name="Brettin T."/>
            <person name="Detter J.C."/>
            <person name="Han C."/>
            <person name="Larimer F."/>
            <person name="Land M."/>
            <person name="Hauser L."/>
            <person name="Kyrpides N."/>
            <person name="Mikhailova N."/>
            <person name="Coates J.D."/>
        </authorList>
    </citation>
    <scope>NUCLEOTIDE SEQUENCE [LARGE SCALE GENOMIC DNA]</scope>
    <source>
        <strain>TPSY</strain>
    </source>
</reference>
<keyword id="KW-0067">ATP-binding</keyword>
<keyword id="KW-0963">Cytoplasm</keyword>
<keyword id="KW-0418">Kinase</keyword>
<keyword id="KW-0460">Magnesium</keyword>
<keyword id="KW-0479">Metal-binding</keyword>
<keyword id="KW-0546">Nucleotide metabolism</keyword>
<keyword id="KW-0547">Nucleotide-binding</keyword>
<keyword id="KW-0597">Phosphoprotein</keyword>
<keyword id="KW-1185">Reference proteome</keyword>
<keyword id="KW-0808">Transferase</keyword>
<proteinExistence type="inferred from homology"/>